<keyword id="KW-0012">Acyltransferase</keyword>
<keyword id="KW-0963">Cytoplasm</keyword>
<keyword id="KW-0808">Transferase</keyword>
<dbReference type="EC" id="2.3.1.181" evidence="1"/>
<dbReference type="EMBL" id="CP000653">
    <property type="protein sequence ID" value="ABP59846.1"/>
    <property type="molecule type" value="Genomic_DNA"/>
</dbReference>
<dbReference type="RefSeq" id="WP_012016565.1">
    <property type="nucleotide sequence ID" value="NC_009436.1"/>
</dbReference>
<dbReference type="SMR" id="A4W816"/>
<dbReference type="STRING" id="399742.Ent638_1165"/>
<dbReference type="KEGG" id="ent:Ent638_1165"/>
<dbReference type="eggNOG" id="COG0321">
    <property type="taxonomic scope" value="Bacteria"/>
</dbReference>
<dbReference type="HOGENOM" id="CLU_035168_3_1_6"/>
<dbReference type="OrthoDB" id="9787061at2"/>
<dbReference type="UniPathway" id="UPA00538">
    <property type="reaction ID" value="UER00592"/>
</dbReference>
<dbReference type="Proteomes" id="UP000000230">
    <property type="component" value="Chromosome"/>
</dbReference>
<dbReference type="GO" id="GO:0005737">
    <property type="term" value="C:cytoplasm"/>
    <property type="evidence" value="ECO:0007669"/>
    <property type="project" value="UniProtKB-SubCell"/>
</dbReference>
<dbReference type="GO" id="GO:0033819">
    <property type="term" value="F:lipoyl(octanoyl) transferase activity"/>
    <property type="evidence" value="ECO:0007669"/>
    <property type="project" value="UniProtKB-EC"/>
</dbReference>
<dbReference type="GO" id="GO:0036211">
    <property type="term" value="P:protein modification process"/>
    <property type="evidence" value="ECO:0007669"/>
    <property type="project" value="InterPro"/>
</dbReference>
<dbReference type="CDD" id="cd16444">
    <property type="entry name" value="LipB"/>
    <property type="match status" value="1"/>
</dbReference>
<dbReference type="FunFam" id="3.30.930.10:FF:000020">
    <property type="entry name" value="Octanoyltransferase"/>
    <property type="match status" value="1"/>
</dbReference>
<dbReference type="Gene3D" id="3.30.930.10">
    <property type="entry name" value="Bira Bifunctional Protein, Domain 2"/>
    <property type="match status" value="1"/>
</dbReference>
<dbReference type="HAMAP" id="MF_00013">
    <property type="entry name" value="LipB"/>
    <property type="match status" value="1"/>
</dbReference>
<dbReference type="InterPro" id="IPR045864">
    <property type="entry name" value="aa-tRNA-synth_II/BPL/LPL"/>
</dbReference>
<dbReference type="InterPro" id="IPR004143">
    <property type="entry name" value="BPL_LPL_catalytic"/>
</dbReference>
<dbReference type="InterPro" id="IPR000544">
    <property type="entry name" value="Octanoyltransferase"/>
</dbReference>
<dbReference type="InterPro" id="IPR020605">
    <property type="entry name" value="Octanoyltransferase_CS"/>
</dbReference>
<dbReference type="NCBIfam" id="TIGR00214">
    <property type="entry name" value="lipB"/>
    <property type="match status" value="1"/>
</dbReference>
<dbReference type="NCBIfam" id="NF010922">
    <property type="entry name" value="PRK14342.1"/>
    <property type="match status" value="1"/>
</dbReference>
<dbReference type="PANTHER" id="PTHR10993:SF7">
    <property type="entry name" value="LIPOYLTRANSFERASE 2, MITOCHONDRIAL-RELATED"/>
    <property type="match status" value="1"/>
</dbReference>
<dbReference type="PANTHER" id="PTHR10993">
    <property type="entry name" value="OCTANOYLTRANSFERASE"/>
    <property type="match status" value="1"/>
</dbReference>
<dbReference type="Pfam" id="PF21948">
    <property type="entry name" value="LplA-B_cat"/>
    <property type="match status" value="1"/>
</dbReference>
<dbReference type="PIRSF" id="PIRSF016262">
    <property type="entry name" value="LPLase"/>
    <property type="match status" value="1"/>
</dbReference>
<dbReference type="SUPFAM" id="SSF55681">
    <property type="entry name" value="Class II aaRS and biotin synthetases"/>
    <property type="match status" value="1"/>
</dbReference>
<dbReference type="PROSITE" id="PS51733">
    <property type="entry name" value="BPL_LPL_CATALYTIC"/>
    <property type="match status" value="1"/>
</dbReference>
<dbReference type="PROSITE" id="PS01313">
    <property type="entry name" value="LIPB"/>
    <property type="match status" value="1"/>
</dbReference>
<evidence type="ECO:0000255" key="1">
    <source>
        <dbReference type="HAMAP-Rule" id="MF_00013"/>
    </source>
</evidence>
<evidence type="ECO:0000255" key="2">
    <source>
        <dbReference type="PROSITE-ProRule" id="PRU01067"/>
    </source>
</evidence>
<sequence>MYQDKILVRHLGLQPYEPVSQAMHDFTDSRDDHTPDEIWLVEHHPVFTQGQAGKAEHVLVPGDIPVIQSDRGGQVTYHGPGQQVMYVLLNLKRRKLGVRELVTLLEQTVVDTLAEYDIDAHPRADAPGVYVGEMKICSLGLRIRKGCSFHGLALNINMDLSPFLRINPCGYAGMEMTQMRQWVENATPGIIGPLLVSKLLALLNNPPHEYIPA</sequence>
<reference key="1">
    <citation type="journal article" date="2010" name="PLoS Genet.">
        <title>Genome sequence of the plant growth promoting endophytic bacterium Enterobacter sp. 638.</title>
        <authorList>
            <person name="Taghavi S."/>
            <person name="van der Lelie D."/>
            <person name="Hoffman A."/>
            <person name="Zhang Y.B."/>
            <person name="Walla M.D."/>
            <person name="Vangronsveld J."/>
            <person name="Newman L."/>
            <person name="Monchy S."/>
        </authorList>
    </citation>
    <scope>NUCLEOTIDE SEQUENCE [LARGE SCALE GENOMIC DNA]</scope>
    <source>
        <strain>638</strain>
    </source>
</reference>
<gene>
    <name evidence="1" type="primary">lipB</name>
    <name type="ordered locus">Ent638_1165</name>
</gene>
<protein>
    <recommendedName>
        <fullName evidence="1">Octanoyltransferase</fullName>
        <ecNumber evidence="1">2.3.1.181</ecNumber>
    </recommendedName>
    <alternativeName>
        <fullName evidence="1">Lipoate-protein ligase B</fullName>
    </alternativeName>
    <alternativeName>
        <fullName evidence="1">Lipoyl/octanoyl transferase</fullName>
    </alternativeName>
    <alternativeName>
        <fullName evidence="1">Octanoyl-[acyl-carrier-protein]-protein N-octanoyltransferase</fullName>
    </alternativeName>
</protein>
<proteinExistence type="inferred from homology"/>
<feature type="chain" id="PRO_0000321631" description="Octanoyltransferase">
    <location>
        <begin position="1"/>
        <end position="213"/>
    </location>
</feature>
<feature type="domain" description="BPL/LPL catalytic" evidence="2">
    <location>
        <begin position="32"/>
        <end position="207"/>
    </location>
</feature>
<feature type="active site" description="Acyl-thioester intermediate" evidence="1">
    <location>
        <position position="169"/>
    </location>
</feature>
<feature type="binding site" evidence="1">
    <location>
        <begin position="71"/>
        <end position="78"/>
    </location>
    <ligand>
        <name>substrate</name>
    </ligand>
</feature>
<feature type="binding site" evidence="1">
    <location>
        <begin position="138"/>
        <end position="140"/>
    </location>
    <ligand>
        <name>substrate</name>
    </ligand>
</feature>
<feature type="binding site" evidence="1">
    <location>
        <begin position="151"/>
        <end position="153"/>
    </location>
    <ligand>
        <name>substrate</name>
    </ligand>
</feature>
<feature type="site" description="Lowers pKa of active site Cys" evidence="1">
    <location>
        <position position="135"/>
    </location>
</feature>
<organism>
    <name type="scientific">Enterobacter sp. (strain 638)</name>
    <dbReference type="NCBI Taxonomy" id="399742"/>
    <lineage>
        <taxon>Bacteria</taxon>
        <taxon>Pseudomonadati</taxon>
        <taxon>Pseudomonadota</taxon>
        <taxon>Gammaproteobacteria</taxon>
        <taxon>Enterobacterales</taxon>
        <taxon>Enterobacteriaceae</taxon>
        <taxon>Enterobacter</taxon>
    </lineage>
</organism>
<name>LIPB_ENT38</name>
<comment type="function">
    <text evidence="1">Catalyzes the transfer of endogenously produced octanoic acid from octanoyl-acyl-carrier-protein onto the lipoyl domains of lipoate-dependent enzymes. Lipoyl-ACP can also act as a substrate although octanoyl-ACP is likely to be the physiological substrate.</text>
</comment>
<comment type="catalytic activity">
    <reaction evidence="1">
        <text>octanoyl-[ACP] + L-lysyl-[protein] = N(6)-octanoyl-L-lysyl-[protein] + holo-[ACP] + H(+)</text>
        <dbReference type="Rhea" id="RHEA:17665"/>
        <dbReference type="Rhea" id="RHEA-COMP:9636"/>
        <dbReference type="Rhea" id="RHEA-COMP:9685"/>
        <dbReference type="Rhea" id="RHEA-COMP:9752"/>
        <dbReference type="Rhea" id="RHEA-COMP:9928"/>
        <dbReference type="ChEBI" id="CHEBI:15378"/>
        <dbReference type="ChEBI" id="CHEBI:29969"/>
        <dbReference type="ChEBI" id="CHEBI:64479"/>
        <dbReference type="ChEBI" id="CHEBI:78463"/>
        <dbReference type="ChEBI" id="CHEBI:78809"/>
        <dbReference type="EC" id="2.3.1.181"/>
    </reaction>
</comment>
<comment type="pathway">
    <text evidence="1">Protein modification; protein lipoylation via endogenous pathway; protein N(6)-(lipoyl)lysine from octanoyl-[acyl-carrier-protein]: step 1/2.</text>
</comment>
<comment type="subcellular location">
    <subcellularLocation>
        <location evidence="1">Cytoplasm</location>
    </subcellularLocation>
</comment>
<comment type="miscellaneous">
    <text evidence="1">In the reaction, the free carboxyl group of octanoic acid is attached via an amide linkage to the epsilon-amino group of a specific lysine residue of lipoyl domains of lipoate-dependent enzymes.</text>
</comment>
<comment type="similarity">
    <text evidence="1">Belongs to the LipB family.</text>
</comment>
<accession>A4W816</accession>